<sequence length="464" mass="49756">MMARRDPTSWAKRLVRAQTLQKQRRAPVGPRAPPPDEEDPRLKCKNCGAFGHTARSTRCPMKCWKAALVPATLGKKEGKENLKPWKPRVEANPGPLNKDKGEKEERPRQQDPQRKALLHMFSGKPPEKPLPNGKGSTEPSDYLRVASGPMPVHTTSKRPRVDPVLADGSATEMSDRGSVLASLSPLRKASLSSSSSLGPKERQTGAAADIPQPAVRHQGREPLLVVKPTHSSPEGGCREVPQAASKTHGLLQAARPQAQDKRPAVTSQPCPPAATHSLGLGSNLSFGPGAKRPAQAPIQACLNFPKKPRLGPFQIPESAIQGGELGAPENLQPPPAATELGPSTSPQMGRRTPAQVPSVERQPPHSRPCLPTAQACTMSHHSAASHDGAQPLRVLFRRLENGRWSSSLLAAPSFHSPEKPGAFLAQSPHVSEKSEAPCVRVPPSVLYEDLQVSSSSEDSDSDLE</sequence>
<protein>
    <recommendedName>
        <fullName evidence="4">Protein FAM90A3</fullName>
    </recommendedName>
</protein>
<feature type="chain" id="PRO_0000459430" description="Protein FAM90A3">
    <location>
        <begin position="1"/>
        <end position="464"/>
    </location>
</feature>
<feature type="region of interest" description="Disordered" evidence="1">
    <location>
        <begin position="1"/>
        <end position="42"/>
    </location>
</feature>
<feature type="region of interest" description="Disordered" evidence="1">
    <location>
        <begin position="70"/>
        <end position="389"/>
    </location>
</feature>
<feature type="region of interest" description="Disordered" evidence="1">
    <location>
        <begin position="411"/>
        <end position="437"/>
    </location>
</feature>
<feature type="compositionally biased region" description="Basic and acidic residues" evidence="1">
    <location>
        <begin position="74"/>
        <end position="89"/>
    </location>
</feature>
<feature type="compositionally biased region" description="Basic and acidic residues" evidence="1">
    <location>
        <begin position="97"/>
        <end position="114"/>
    </location>
</feature>
<feature type="compositionally biased region" description="Low complexity" evidence="1">
    <location>
        <begin position="180"/>
        <end position="197"/>
    </location>
</feature>
<comment type="miscellaneous">
    <text evidence="3">Primate-specific FAM90A gene family, thought to have arisen during multiple duplication and rearrangement events.</text>
</comment>
<comment type="similarity">
    <text evidence="2">Belongs to the FAM90 family.</text>
</comment>
<gene>
    <name evidence="4" type="primary">FAM90A3</name>
    <name evidence="4" type="synonym">FAM90A3P</name>
</gene>
<reference key="1">
    <citation type="journal article" date="2006" name="Nature">
        <title>DNA sequence and analysis of human chromosome 8.</title>
        <authorList>
            <person name="Nusbaum C."/>
            <person name="Mikkelsen T.S."/>
            <person name="Zody M.C."/>
            <person name="Asakawa S."/>
            <person name="Taudien S."/>
            <person name="Garber M."/>
            <person name="Kodira C.D."/>
            <person name="Schueler M.G."/>
            <person name="Shimizu A."/>
            <person name="Whittaker C.A."/>
            <person name="Chang J.L."/>
            <person name="Cuomo C.A."/>
            <person name="Dewar K."/>
            <person name="FitzGerald M.G."/>
            <person name="Yang X."/>
            <person name="Allen N.R."/>
            <person name="Anderson S."/>
            <person name="Asakawa T."/>
            <person name="Blechschmidt K."/>
            <person name="Bloom T."/>
            <person name="Borowsky M.L."/>
            <person name="Butler J."/>
            <person name="Cook A."/>
            <person name="Corum B."/>
            <person name="DeArellano K."/>
            <person name="DeCaprio D."/>
            <person name="Dooley K.T."/>
            <person name="Dorris L. III"/>
            <person name="Engels R."/>
            <person name="Gloeckner G."/>
            <person name="Hafez N."/>
            <person name="Hagopian D.S."/>
            <person name="Hall J.L."/>
            <person name="Ishikawa S.K."/>
            <person name="Jaffe D.B."/>
            <person name="Kamat A."/>
            <person name="Kudoh J."/>
            <person name="Lehmann R."/>
            <person name="Lokitsang T."/>
            <person name="Macdonald P."/>
            <person name="Major J.E."/>
            <person name="Matthews C.D."/>
            <person name="Mauceli E."/>
            <person name="Menzel U."/>
            <person name="Mihalev A.H."/>
            <person name="Minoshima S."/>
            <person name="Murayama Y."/>
            <person name="Naylor J.W."/>
            <person name="Nicol R."/>
            <person name="Nguyen C."/>
            <person name="O'Leary S.B."/>
            <person name="O'Neill K."/>
            <person name="Parker S.C.J."/>
            <person name="Polley A."/>
            <person name="Raymond C.K."/>
            <person name="Reichwald K."/>
            <person name="Rodriguez J."/>
            <person name="Sasaki T."/>
            <person name="Schilhabel M."/>
            <person name="Siddiqui R."/>
            <person name="Smith C.L."/>
            <person name="Sneddon T.P."/>
            <person name="Talamas J.A."/>
            <person name="Tenzin P."/>
            <person name="Topham K."/>
            <person name="Venkataraman V."/>
            <person name="Wen G."/>
            <person name="Yamazaki S."/>
            <person name="Young S.K."/>
            <person name="Zeng Q."/>
            <person name="Zimmer A.R."/>
            <person name="Rosenthal A."/>
            <person name="Birren B.W."/>
            <person name="Platzer M."/>
            <person name="Shimizu N."/>
            <person name="Lander E.S."/>
        </authorList>
    </citation>
    <scope>NUCLEOTIDE SEQUENCE [LARGE SCALE GENOMIC DNA]</scope>
</reference>
<reference key="2">
    <citation type="journal article" date="2007" name="Hum. Mol. Genet.">
        <title>Characterization and evolution of the novel gene family FAM90A in primates originated by multiple duplication and rearrangement events.</title>
        <authorList>
            <person name="Bosch N."/>
            <person name="Caceres M."/>
            <person name="Cardone M.F."/>
            <person name="Carreras A."/>
            <person name="Ballana E."/>
            <person name="Rocchi M."/>
            <person name="Armengol L."/>
            <person name="Estivill X."/>
        </authorList>
    </citation>
    <scope>CHARACTERIZATION</scope>
</reference>
<keyword id="KW-1185">Reference proteome</keyword>
<dbReference type="EMBL" id="AF228730">
    <property type="status" value="NOT_ANNOTATED_CDS"/>
    <property type="molecule type" value="Genomic_DNA"/>
</dbReference>
<dbReference type="RefSeq" id="NP_001410457.1">
    <property type="nucleotide sequence ID" value="NM_001423528.1"/>
</dbReference>
<dbReference type="Ensembl" id="ENST00000506444.1">
    <property type="protein sequence ID" value="ENSP00000514262.1"/>
    <property type="gene ID" value="ENSG00000233132.4"/>
</dbReference>
<dbReference type="GeneID" id="389611"/>
<dbReference type="MANE-Select" id="ENST00000506444.1">
    <property type="protein sequence ID" value="ENSP00000514262.1"/>
    <property type="RefSeq nucleotide sequence ID" value="NM_001423528.1"/>
    <property type="RefSeq protein sequence ID" value="NP_001410457.1"/>
</dbReference>
<dbReference type="AGR" id="HGNC:32251"/>
<dbReference type="GeneCards" id="FAM90A3"/>
<dbReference type="HGNC" id="HGNC:32251">
    <property type="gene designation" value="FAM90A3"/>
</dbReference>
<dbReference type="MIM" id="613042">
    <property type="type" value="gene"/>
</dbReference>
<dbReference type="GeneTree" id="ENSGT00910000144208"/>
<dbReference type="PRO" id="PR:A0A8V8TPE2"/>
<dbReference type="Proteomes" id="UP000005640">
    <property type="component" value="Chromosome 8"/>
</dbReference>
<dbReference type="InterPro" id="IPR039213">
    <property type="entry name" value="FAM90"/>
</dbReference>
<dbReference type="InterPro" id="IPR041670">
    <property type="entry name" value="Znf-CCHC_6"/>
</dbReference>
<dbReference type="PANTHER" id="PTHR16035:SF14">
    <property type="entry name" value="FAMILY WITH SEQUENCE SIMILARITY 90 MEMBER A11, PSEUDOGENE-RELATED"/>
    <property type="match status" value="1"/>
</dbReference>
<dbReference type="PANTHER" id="PTHR16035">
    <property type="entry name" value="PROTEIN FAM90A1"/>
    <property type="match status" value="1"/>
</dbReference>
<dbReference type="Pfam" id="PF15288">
    <property type="entry name" value="zf-CCHC_6"/>
    <property type="match status" value="1"/>
</dbReference>
<organism>
    <name type="scientific">Homo sapiens</name>
    <name type="common">Human</name>
    <dbReference type="NCBI Taxonomy" id="9606"/>
    <lineage>
        <taxon>Eukaryota</taxon>
        <taxon>Metazoa</taxon>
        <taxon>Chordata</taxon>
        <taxon>Craniata</taxon>
        <taxon>Vertebrata</taxon>
        <taxon>Euteleostomi</taxon>
        <taxon>Mammalia</taxon>
        <taxon>Eutheria</taxon>
        <taxon>Euarchontoglires</taxon>
        <taxon>Primates</taxon>
        <taxon>Haplorrhini</taxon>
        <taxon>Catarrhini</taxon>
        <taxon>Hominidae</taxon>
        <taxon>Homo</taxon>
    </lineage>
</organism>
<proteinExistence type="evidence at protein level"/>
<name>F90A3_HUMAN</name>
<accession>A0A8V8TPE2</accession>
<evidence type="ECO:0000256" key="1">
    <source>
        <dbReference type="SAM" id="MobiDB-lite"/>
    </source>
</evidence>
<evidence type="ECO:0000305" key="2"/>
<evidence type="ECO:0000305" key="3">
    <source>
    </source>
</evidence>
<evidence type="ECO:0000312" key="4">
    <source>
        <dbReference type="HGNC" id="HGNC:32251"/>
    </source>
</evidence>